<dbReference type="EMBL" id="CH408160">
    <property type="protein sequence ID" value="EDK40762.2"/>
    <property type="molecule type" value="Genomic_DNA"/>
</dbReference>
<dbReference type="RefSeq" id="XP_001482905.1">
    <property type="nucleotide sequence ID" value="XM_001482855.1"/>
</dbReference>
<dbReference type="SMR" id="A5DNK9"/>
<dbReference type="FunCoup" id="A5DNK9">
    <property type="interactions" value="453"/>
</dbReference>
<dbReference type="STRING" id="294746.A5DNK9"/>
<dbReference type="GeneID" id="5124836"/>
<dbReference type="KEGG" id="pgu:PGUG_04860"/>
<dbReference type="VEuPathDB" id="FungiDB:PGUG_04860"/>
<dbReference type="eggNOG" id="KOG0646">
    <property type="taxonomic scope" value="Eukaryota"/>
</dbReference>
<dbReference type="HOGENOM" id="CLU_029749_4_0_1"/>
<dbReference type="InParanoid" id="A5DNK9"/>
<dbReference type="OMA" id="INIAICW"/>
<dbReference type="OrthoDB" id="756370at2759"/>
<dbReference type="Proteomes" id="UP000001997">
    <property type="component" value="Unassembled WGS sequence"/>
</dbReference>
<dbReference type="GO" id="GO:0005656">
    <property type="term" value="C:nuclear pre-replicative complex"/>
    <property type="evidence" value="ECO:0007669"/>
    <property type="project" value="TreeGrafter"/>
</dbReference>
<dbReference type="GO" id="GO:0120330">
    <property type="term" value="C:rixosome complex"/>
    <property type="evidence" value="ECO:0007669"/>
    <property type="project" value="TreeGrafter"/>
</dbReference>
<dbReference type="GO" id="GO:0006261">
    <property type="term" value="P:DNA-templated DNA replication"/>
    <property type="evidence" value="ECO:0007669"/>
    <property type="project" value="TreeGrafter"/>
</dbReference>
<dbReference type="GO" id="GO:0006364">
    <property type="term" value="P:rRNA processing"/>
    <property type="evidence" value="ECO:0007669"/>
    <property type="project" value="UniProtKB-KW"/>
</dbReference>
<dbReference type="Gene3D" id="2.130.10.10">
    <property type="entry name" value="YVTN repeat-like/Quinoprotein amine dehydrogenase"/>
    <property type="match status" value="2"/>
</dbReference>
<dbReference type="InterPro" id="IPR015943">
    <property type="entry name" value="WD40/YVTN_repeat-like_dom_sf"/>
</dbReference>
<dbReference type="InterPro" id="IPR036322">
    <property type="entry name" value="WD40_repeat_dom_sf"/>
</dbReference>
<dbReference type="InterPro" id="IPR001680">
    <property type="entry name" value="WD40_rpt"/>
</dbReference>
<dbReference type="InterPro" id="IPR045227">
    <property type="entry name" value="WDR18/Ipi3/RID3"/>
</dbReference>
<dbReference type="PANTHER" id="PTHR18763:SF0">
    <property type="entry name" value="WD REPEAT-CONTAINING PROTEIN 18"/>
    <property type="match status" value="1"/>
</dbReference>
<dbReference type="PANTHER" id="PTHR18763">
    <property type="entry name" value="WD-REPEAT PROTEIN 18"/>
    <property type="match status" value="1"/>
</dbReference>
<dbReference type="Pfam" id="PF00400">
    <property type="entry name" value="WD40"/>
    <property type="match status" value="2"/>
</dbReference>
<dbReference type="SMART" id="SM00320">
    <property type="entry name" value="WD40"/>
    <property type="match status" value="5"/>
</dbReference>
<dbReference type="SUPFAM" id="SSF50978">
    <property type="entry name" value="WD40 repeat-like"/>
    <property type="match status" value="1"/>
</dbReference>
<dbReference type="PROSITE" id="PS50082">
    <property type="entry name" value="WD_REPEATS_2"/>
    <property type="match status" value="1"/>
</dbReference>
<dbReference type="PROSITE" id="PS50294">
    <property type="entry name" value="WD_REPEATS_REGION"/>
    <property type="match status" value="1"/>
</dbReference>
<name>IPI3_PICGU</name>
<protein>
    <recommendedName>
        <fullName>Pre-rRNA-processing protein IPI3</fullName>
    </recommendedName>
</protein>
<accession>A5DNK9</accession>
<reference key="1">
    <citation type="journal article" date="2009" name="Nature">
        <title>Evolution of pathogenicity and sexual reproduction in eight Candida genomes.</title>
        <authorList>
            <person name="Butler G."/>
            <person name="Rasmussen M.D."/>
            <person name="Lin M.F."/>
            <person name="Santos M.A.S."/>
            <person name="Sakthikumar S."/>
            <person name="Munro C.A."/>
            <person name="Rheinbay E."/>
            <person name="Grabherr M."/>
            <person name="Forche A."/>
            <person name="Reedy J.L."/>
            <person name="Agrafioti I."/>
            <person name="Arnaud M.B."/>
            <person name="Bates S."/>
            <person name="Brown A.J.P."/>
            <person name="Brunke S."/>
            <person name="Costanzo M.C."/>
            <person name="Fitzpatrick D.A."/>
            <person name="de Groot P.W.J."/>
            <person name="Harris D."/>
            <person name="Hoyer L.L."/>
            <person name="Hube B."/>
            <person name="Klis F.M."/>
            <person name="Kodira C."/>
            <person name="Lennard N."/>
            <person name="Logue M.E."/>
            <person name="Martin R."/>
            <person name="Neiman A.M."/>
            <person name="Nikolaou E."/>
            <person name="Quail M.A."/>
            <person name="Quinn J."/>
            <person name="Santos M.C."/>
            <person name="Schmitzberger F.F."/>
            <person name="Sherlock G."/>
            <person name="Shah P."/>
            <person name="Silverstein K.A.T."/>
            <person name="Skrzypek M.S."/>
            <person name="Soll D."/>
            <person name="Staggs R."/>
            <person name="Stansfield I."/>
            <person name="Stumpf M.P.H."/>
            <person name="Sudbery P.E."/>
            <person name="Srikantha T."/>
            <person name="Zeng Q."/>
            <person name="Berman J."/>
            <person name="Berriman M."/>
            <person name="Heitman J."/>
            <person name="Gow N.A.R."/>
            <person name="Lorenz M.C."/>
            <person name="Birren B.W."/>
            <person name="Kellis M."/>
            <person name="Cuomo C.A."/>
        </authorList>
    </citation>
    <scope>NUCLEOTIDE SEQUENCE [LARGE SCALE GENOMIC DNA]</scope>
    <source>
        <strain>ATCC 6260 / CBS 566 / DSM 6381 / JCM 1539 / NBRC 10279 / NRRL Y-324</strain>
    </source>
</reference>
<feature type="chain" id="PRO_0000308742" description="Pre-rRNA-processing protein IPI3">
    <location>
        <begin position="1"/>
        <end position="451"/>
    </location>
</feature>
<feature type="repeat" description="WD 1">
    <location>
        <begin position="89"/>
        <end position="129"/>
    </location>
</feature>
<feature type="repeat" description="WD 2">
    <location>
        <begin position="132"/>
        <end position="171"/>
    </location>
</feature>
<feature type="repeat" description="WD 3">
    <location>
        <begin position="185"/>
        <end position="227"/>
    </location>
</feature>
<feature type="repeat" description="WD 4">
    <location>
        <begin position="229"/>
        <end position="271"/>
    </location>
</feature>
<feature type="region of interest" description="Disordered" evidence="2">
    <location>
        <begin position="408"/>
        <end position="428"/>
    </location>
</feature>
<evidence type="ECO:0000250" key="1">
    <source>
        <dbReference type="UniProtKB" id="P53877"/>
    </source>
</evidence>
<evidence type="ECO:0000256" key="2">
    <source>
        <dbReference type="SAM" id="MobiDB-lite"/>
    </source>
</evidence>
<evidence type="ECO:0000305" key="3"/>
<sequence length="451" mass="49453">MDESILYVPAGPEGSALAASLHSTRQNAAFRYADSKFLSAVCSGQKAGDRLFLAGSKPLITVYSWGKESPDQRIPVPEPLTCMALCKHPSNEKINHKVPTFQLPWLLAGGSASGKLYIWELSSGNLVCVKEAHYQAINVLKFSECGTYLVSGGADARCSVWKTLDLVTIDDPETQKTASALTFMDHTLAVTDIWLTTGIRSDIRLYSSSKDGTVRNYDITSGKLITTFVLPLSVECLAVDPAGRACYAGLSDGTIRTVLQYKVNPHTSVLEAVGGNGKVVTLATDPELRESFVHHQPHRVTSVKVSLDGTTIISSDESGRVMVADAVTTQVVKALSPATSPVIYLAVDTVVAGSQFGRFEKKHRLIPQLKRVLVDGDLTKHFVSMEFSEEIKPQPDFDLWLQQKAEEAREVEEEKPKQKEQDSETEKLAKLTKAYGDLRQKHEQLLREMSA</sequence>
<proteinExistence type="inferred from homology"/>
<gene>
    <name type="primary">IPI3</name>
    <name type="ORF">PGUG_04860</name>
</gene>
<keyword id="KW-0539">Nucleus</keyword>
<keyword id="KW-1185">Reference proteome</keyword>
<keyword id="KW-0677">Repeat</keyword>
<keyword id="KW-0690">Ribosome biogenesis</keyword>
<keyword id="KW-0698">rRNA processing</keyword>
<keyword id="KW-0853">WD repeat</keyword>
<comment type="function">
    <text evidence="1">Component of the RIX1 complex required for processing of ITS2 sequences from 35S pre-rRNA.</text>
</comment>
<comment type="subunit">
    <text evidence="1">Component of the RIX1 complex, composed of IPI1, RIX1/IPI2 and IPI3 in a 1:2:2 stoichiometry. The complex interacts (via RIX1) with MDN1 (via its hexameric AAA ATPase ring) and the pre-60S ribosome particles.</text>
</comment>
<comment type="subcellular location">
    <subcellularLocation>
        <location evidence="1">Nucleus</location>
    </subcellularLocation>
</comment>
<comment type="similarity">
    <text evidence="3">Belongs to the WD repeat IPI3/WDR18 family.</text>
</comment>
<organism>
    <name type="scientific">Meyerozyma guilliermondii (strain ATCC 6260 / CBS 566 / DSM 6381 / JCM 1539 / NBRC 10279 / NRRL Y-324)</name>
    <name type="common">Yeast</name>
    <name type="synonym">Candida guilliermondii</name>
    <dbReference type="NCBI Taxonomy" id="294746"/>
    <lineage>
        <taxon>Eukaryota</taxon>
        <taxon>Fungi</taxon>
        <taxon>Dikarya</taxon>
        <taxon>Ascomycota</taxon>
        <taxon>Saccharomycotina</taxon>
        <taxon>Pichiomycetes</taxon>
        <taxon>Debaryomycetaceae</taxon>
        <taxon>Meyerozyma</taxon>
    </lineage>
</organism>